<feature type="chain" id="PRO_1000080505" description="Probable protein kinase UbiB">
    <location>
        <begin position="1"/>
        <end position="549"/>
    </location>
</feature>
<feature type="transmembrane region" description="Helical" evidence="1">
    <location>
        <begin position="498"/>
        <end position="518"/>
    </location>
</feature>
<feature type="transmembrane region" description="Helical" evidence="1">
    <location>
        <begin position="520"/>
        <end position="540"/>
    </location>
</feature>
<feature type="domain" description="Protein kinase" evidence="1">
    <location>
        <begin position="123"/>
        <end position="501"/>
    </location>
</feature>
<feature type="active site" description="Proton acceptor" evidence="1">
    <location>
        <position position="287"/>
    </location>
</feature>
<feature type="binding site" evidence="1">
    <location>
        <begin position="129"/>
        <end position="137"/>
    </location>
    <ligand>
        <name>ATP</name>
        <dbReference type="ChEBI" id="CHEBI:30616"/>
    </ligand>
</feature>
<feature type="binding site" evidence="1">
    <location>
        <position position="152"/>
    </location>
    <ligand>
        <name>ATP</name>
        <dbReference type="ChEBI" id="CHEBI:30616"/>
    </ligand>
</feature>
<proteinExistence type="inferred from homology"/>
<organism>
    <name type="scientific">Shewanella halifaxensis (strain HAW-EB4)</name>
    <dbReference type="NCBI Taxonomy" id="458817"/>
    <lineage>
        <taxon>Bacteria</taxon>
        <taxon>Pseudomonadati</taxon>
        <taxon>Pseudomonadota</taxon>
        <taxon>Gammaproteobacteria</taxon>
        <taxon>Alteromonadales</taxon>
        <taxon>Shewanellaceae</taxon>
        <taxon>Shewanella</taxon>
    </lineage>
</organism>
<reference key="1">
    <citation type="submission" date="2008-01" db="EMBL/GenBank/DDBJ databases">
        <title>Complete sequence of Shewanella halifaxensis HAW-EB4.</title>
        <authorList>
            <consortium name="US DOE Joint Genome Institute"/>
            <person name="Copeland A."/>
            <person name="Lucas S."/>
            <person name="Lapidus A."/>
            <person name="Glavina del Rio T."/>
            <person name="Dalin E."/>
            <person name="Tice H."/>
            <person name="Bruce D."/>
            <person name="Goodwin L."/>
            <person name="Pitluck S."/>
            <person name="Sims D."/>
            <person name="Brettin T."/>
            <person name="Detter J.C."/>
            <person name="Han C."/>
            <person name="Kuske C.R."/>
            <person name="Schmutz J."/>
            <person name="Larimer F."/>
            <person name="Land M."/>
            <person name="Hauser L."/>
            <person name="Kyrpides N."/>
            <person name="Kim E."/>
            <person name="Zhao J.-S."/>
            <person name="Richardson P."/>
        </authorList>
    </citation>
    <scope>NUCLEOTIDE SEQUENCE [LARGE SCALE GENOMIC DNA]</scope>
    <source>
        <strain>HAW-EB4</strain>
    </source>
</reference>
<dbReference type="EC" id="2.7.-.-" evidence="1"/>
<dbReference type="EMBL" id="CP000931">
    <property type="protein sequence ID" value="ABZ78421.1"/>
    <property type="molecule type" value="Genomic_DNA"/>
</dbReference>
<dbReference type="RefSeq" id="WP_012278938.1">
    <property type="nucleotide sequence ID" value="NC_010334.1"/>
</dbReference>
<dbReference type="SMR" id="B0TJ18"/>
<dbReference type="STRING" id="458817.Shal_3881"/>
<dbReference type="KEGG" id="shl:Shal_3881"/>
<dbReference type="eggNOG" id="COG0661">
    <property type="taxonomic scope" value="Bacteria"/>
</dbReference>
<dbReference type="HOGENOM" id="CLU_006533_0_0_6"/>
<dbReference type="OrthoDB" id="9795390at2"/>
<dbReference type="UniPathway" id="UPA00232"/>
<dbReference type="Proteomes" id="UP000001317">
    <property type="component" value="Chromosome"/>
</dbReference>
<dbReference type="GO" id="GO:0005886">
    <property type="term" value="C:plasma membrane"/>
    <property type="evidence" value="ECO:0007669"/>
    <property type="project" value="UniProtKB-SubCell"/>
</dbReference>
<dbReference type="GO" id="GO:0005524">
    <property type="term" value="F:ATP binding"/>
    <property type="evidence" value="ECO:0007669"/>
    <property type="project" value="UniProtKB-KW"/>
</dbReference>
<dbReference type="GO" id="GO:0004672">
    <property type="term" value="F:protein kinase activity"/>
    <property type="evidence" value="ECO:0007669"/>
    <property type="project" value="UniProtKB-UniRule"/>
</dbReference>
<dbReference type="GO" id="GO:0010795">
    <property type="term" value="P:regulation of ubiquinone biosynthetic process"/>
    <property type="evidence" value="ECO:0007669"/>
    <property type="project" value="UniProtKB-UniRule"/>
</dbReference>
<dbReference type="GO" id="GO:0006744">
    <property type="term" value="P:ubiquinone biosynthetic process"/>
    <property type="evidence" value="ECO:0007669"/>
    <property type="project" value="UniProtKB-UniPathway"/>
</dbReference>
<dbReference type="CDD" id="cd13972">
    <property type="entry name" value="UbiB"/>
    <property type="match status" value="1"/>
</dbReference>
<dbReference type="HAMAP" id="MF_00414">
    <property type="entry name" value="UbiB"/>
    <property type="match status" value="1"/>
</dbReference>
<dbReference type="InterPro" id="IPR004147">
    <property type="entry name" value="ABC1_dom"/>
</dbReference>
<dbReference type="InterPro" id="IPR011009">
    <property type="entry name" value="Kinase-like_dom_sf"/>
</dbReference>
<dbReference type="InterPro" id="IPR010232">
    <property type="entry name" value="UbiB"/>
</dbReference>
<dbReference type="InterPro" id="IPR045308">
    <property type="entry name" value="UbiB_bact"/>
</dbReference>
<dbReference type="InterPro" id="IPR050154">
    <property type="entry name" value="UbiB_kinase"/>
</dbReference>
<dbReference type="NCBIfam" id="NF003404">
    <property type="entry name" value="PRK04750.1"/>
    <property type="match status" value="1"/>
</dbReference>
<dbReference type="NCBIfam" id="TIGR01982">
    <property type="entry name" value="UbiB"/>
    <property type="match status" value="1"/>
</dbReference>
<dbReference type="PANTHER" id="PTHR10566">
    <property type="entry name" value="CHAPERONE-ACTIVITY OF BC1 COMPLEX CABC1 -RELATED"/>
    <property type="match status" value="1"/>
</dbReference>
<dbReference type="PANTHER" id="PTHR10566:SF113">
    <property type="entry name" value="PROTEIN ACTIVITY OF BC1 COMPLEX KINASE 7, CHLOROPLASTIC"/>
    <property type="match status" value="1"/>
</dbReference>
<dbReference type="Pfam" id="PF03109">
    <property type="entry name" value="ABC1"/>
    <property type="match status" value="1"/>
</dbReference>
<dbReference type="SUPFAM" id="SSF56112">
    <property type="entry name" value="Protein kinase-like (PK-like)"/>
    <property type="match status" value="1"/>
</dbReference>
<keyword id="KW-0067">ATP-binding</keyword>
<keyword id="KW-0997">Cell inner membrane</keyword>
<keyword id="KW-1003">Cell membrane</keyword>
<keyword id="KW-0418">Kinase</keyword>
<keyword id="KW-0472">Membrane</keyword>
<keyword id="KW-0547">Nucleotide-binding</keyword>
<keyword id="KW-0808">Transferase</keyword>
<keyword id="KW-0812">Transmembrane</keyword>
<keyword id="KW-1133">Transmembrane helix</keyword>
<keyword id="KW-0831">Ubiquinone biosynthesis</keyword>
<comment type="function">
    <text evidence="1">Is probably a protein kinase regulator of UbiI activity which is involved in aerobic coenzyme Q (ubiquinone) biosynthesis.</text>
</comment>
<comment type="pathway">
    <text>Cofactor biosynthesis; ubiquinone biosynthesis [regulation].</text>
</comment>
<comment type="subcellular location">
    <subcellularLocation>
        <location evidence="1">Cell inner membrane</location>
        <topology evidence="1">Multi-pass membrane protein</topology>
    </subcellularLocation>
</comment>
<comment type="similarity">
    <text evidence="1">Belongs to the ABC1 family. UbiB subfamily.</text>
</comment>
<evidence type="ECO:0000255" key="1">
    <source>
        <dbReference type="HAMAP-Rule" id="MF_00414"/>
    </source>
</evidence>
<protein>
    <recommendedName>
        <fullName evidence="1">Probable protein kinase UbiB</fullName>
        <ecNumber evidence="1">2.7.-.-</ecNumber>
    </recommendedName>
    <alternativeName>
        <fullName evidence="1">Ubiquinone biosynthesis protein UbiB</fullName>
    </alternativeName>
</protein>
<accession>B0TJ18</accession>
<name>UBIB_SHEHH</name>
<sequence>MTAKNIRRAYHVIRTALHYGLDDLIPSKLTPWYFKLFRYSFFWLRNQHKDKVGGERLKLAMQELGPVYIKFGQMLSTRRDLLSDEWAEELAMLQDRVPPFDSAIARASIETELNAPIESYFNDFDDIPLASASISQVHTATLKSNGAAVVLKILRPDVEQKVHADLLLMSQAADFLETLLGTNNRLRPAEVVEDYRTTIEGELNLKLEALNAIKLRNNFIDSNALYIPYMYEELCFTRLIVMERIDGIPVSDKVALEAQGTNLKLLAERGVELFFTQVFRDNFFHADMHPGNIFVSREHPNDPLYIGLDCGIMGTLTEEDKRYLAENFLAFFNRDYRRIAQLYIESGWVSPDTDVAAFEQAVKVVCEPMFNKPLDEISFGHVLLELFRTARRFDMVVQPQLVLLEKTLLYIEGLGRQLYPQLDLWQTAKPFLEQWMAEQVGPKVMAAKVKQKLPYWAEHLPELPELIYDNLKMGRNLSKNQNNLLDRYLKHQQKAHKSNYLLITSAILVICGTILINQDATLWPSYGSIGTGIALWVLGWRSRPKNRKI</sequence>
<gene>
    <name evidence="1" type="primary">ubiB</name>
    <name type="ordered locus">Shal_3881</name>
</gene>